<name>ASSY_LACLS</name>
<reference key="1">
    <citation type="journal article" date="2006" name="Proc. Natl. Acad. Sci. U.S.A.">
        <title>Comparative genomics of the lactic acid bacteria.</title>
        <authorList>
            <person name="Makarova K.S."/>
            <person name="Slesarev A."/>
            <person name="Wolf Y.I."/>
            <person name="Sorokin A."/>
            <person name="Mirkin B."/>
            <person name="Koonin E.V."/>
            <person name="Pavlov A."/>
            <person name="Pavlova N."/>
            <person name="Karamychev V."/>
            <person name="Polouchine N."/>
            <person name="Shakhova V."/>
            <person name="Grigoriev I."/>
            <person name="Lou Y."/>
            <person name="Rohksar D."/>
            <person name="Lucas S."/>
            <person name="Huang K."/>
            <person name="Goodstein D.M."/>
            <person name="Hawkins T."/>
            <person name="Plengvidhya V."/>
            <person name="Welker D."/>
            <person name="Hughes J."/>
            <person name="Goh Y."/>
            <person name="Benson A."/>
            <person name="Baldwin K."/>
            <person name="Lee J.-H."/>
            <person name="Diaz-Muniz I."/>
            <person name="Dosti B."/>
            <person name="Smeianov V."/>
            <person name="Wechter W."/>
            <person name="Barabote R."/>
            <person name="Lorca G."/>
            <person name="Altermann E."/>
            <person name="Barrangou R."/>
            <person name="Ganesan B."/>
            <person name="Xie Y."/>
            <person name="Rawsthorne H."/>
            <person name="Tamir D."/>
            <person name="Parker C."/>
            <person name="Breidt F."/>
            <person name="Broadbent J.R."/>
            <person name="Hutkins R."/>
            <person name="O'Sullivan D."/>
            <person name="Steele J."/>
            <person name="Unlu G."/>
            <person name="Saier M.H. Jr."/>
            <person name="Klaenhammer T."/>
            <person name="Richardson P."/>
            <person name="Kozyavkin S."/>
            <person name="Weimer B.C."/>
            <person name="Mills D.A."/>
        </authorList>
    </citation>
    <scope>NUCLEOTIDE SEQUENCE [LARGE SCALE GENOMIC DNA]</scope>
    <source>
        <strain>SK11</strain>
    </source>
</reference>
<gene>
    <name evidence="1" type="primary">argG</name>
    <name type="ordered locus">LACR_0125</name>
</gene>
<sequence length="397" mass="43839">MGNKKIVLAYSGGLDTSVAVKWLTDKGFDVIAACMDVGEGKDLNFIHDKALQVGAVESVVLNCKAEFAEIFVGAALKGNLMYENKYPLVSALSRPLIAKKLVEVAKEKGATAIAHGCTGKGNDQVRFEVAIHSLAPELEVIAPVREWHWAREEEIEYANQNGVPIPADLDNPYSIDMNLWGRAIEAGVLENPWNTCPEDAFFMINSVEDAPNEPEFIEVEFKEGLPIALNGKIMELHEIIKEVNIIAGKHGVGRIDHIENRLVGIKSREFYECPAAITLLKAHKDLEDLTFVRELAHFKPVLENELANLIYNGLWFNPATKALIAYLDETQKVVNGIVRIKLYKGLATPIGRKSTNSLYSEKLATYTAADEFDQAAAVGFIKLWGLPTQVNAQVNLK</sequence>
<dbReference type="EC" id="6.3.4.5" evidence="1"/>
<dbReference type="EMBL" id="CP000425">
    <property type="protein sequence ID" value="ABJ71746.1"/>
    <property type="molecule type" value="Genomic_DNA"/>
</dbReference>
<dbReference type="RefSeq" id="WP_011675181.1">
    <property type="nucleotide sequence ID" value="NC_008527.1"/>
</dbReference>
<dbReference type="SMR" id="Q032X6"/>
<dbReference type="KEGG" id="llc:LACR_0125"/>
<dbReference type="HOGENOM" id="CLU_032784_4_2_9"/>
<dbReference type="UniPathway" id="UPA00068">
    <property type="reaction ID" value="UER00113"/>
</dbReference>
<dbReference type="Proteomes" id="UP000000240">
    <property type="component" value="Chromosome"/>
</dbReference>
<dbReference type="GO" id="GO:0005737">
    <property type="term" value="C:cytoplasm"/>
    <property type="evidence" value="ECO:0007669"/>
    <property type="project" value="UniProtKB-SubCell"/>
</dbReference>
<dbReference type="GO" id="GO:0004055">
    <property type="term" value="F:argininosuccinate synthase activity"/>
    <property type="evidence" value="ECO:0007669"/>
    <property type="project" value="UniProtKB-UniRule"/>
</dbReference>
<dbReference type="GO" id="GO:0005524">
    <property type="term" value="F:ATP binding"/>
    <property type="evidence" value="ECO:0007669"/>
    <property type="project" value="UniProtKB-UniRule"/>
</dbReference>
<dbReference type="GO" id="GO:0000053">
    <property type="term" value="P:argininosuccinate metabolic process"/>
    <property type="evidence" value="ECO:0007669"/>
    <property type="project" value="TreeGrafter"/>
</dbReference>
<dbReference type="GO" id="GO:0006526">
    <property type="term" value="P:L-arginine biosynthetic process"/>
    <property type="evidence" value="ECO:0007669"/>
    <property type="project" value="UniProtKB-UniRule"/>
</dbReference>
<dbReference type="GO" id="GO:0000050">
    <property type="term" value="P:urea cycle"/>
    <property type="evidence" value="ECO:0007669"/>
    <property type="project" value="TreeGrafter"/>
</dbReference>
<dbReference type="CDD" id="cd01999">
    <property type="entry name" value="ASS"/>
    <property type="match status" value="1"/>
</dbReference>
<dbReference type="FunFam" id="1.20.5.470:FF:000002">
    <property type="entry name" value="Argininosuccinate synthase"/>
    <property type="match status" value="1"/>
</dbReference>
<dbReference type="FunFam" id="3.40.50.620:FF:000038">
    <property type="entry name" value="Argininosuccinate synthase"/>
    <property type="match status" value="1"/>
</dbReference>
<dbReference type="FunFam" id="3.90.1260.10:FF:000007">
    <property type="entry name" value="Argininosuccinate synthase"/>
    <property type="match status" value="1"/>
</dbReference>
<dbReference type="Gene3D" id="3.90.1260.10">
    <property type="entry name" value="Argininosuccinate synthetase, chain A, domain 2"/>
    <property type="match status" value="1"/>
</dbReference>
<dbReference type="Gene3D" id="3.40.50.620">
    <property type="entry name" value="HUPs"/>
    <property type="match status" value="1"/>
</dbReference>
<dbReference type="Gene3D" id="1.20.5.470">
    <property type="entry name" value="Single helix bin"/>
    <property type="match status" value="1"/>
</dbReference>
<dbReference type="HAMAP" id="MF_00005">
    <property type="entry name" value="Arg_succ_synth_type1"/>
    <property type="match status" value="1"/>
</dbReference>
<dbReference type="InterPro" id="IPR048268">
    <property type="entry name" value="Arginosuc_syn_C"/>
</dbReference>
<dbReference type="InterPro" id="IPR048267">
    <property type="entry name" value="Arginosuc_syn_N"/>
</dbReference>
<dbReference type="InterPro" id="IPR001518">
    <property type="entry name" value="Arginosuc_synth"/>
</dbReference>
<dbReference type="InterPro" id="IPR018223">
    <property type="entry name" value="Arginosuc_synth_CS"/>
</dbReference>
<dbReference type="InterPro" id="IPR023434">
    <property type="entry name" value="Arginosuc_synth_type_1_subfam"/>
</dbReference>
<dbReference type="InterPro" id="IPR024074">
    <property type="entry name" value="AS_cat/multimer_dom_body"/>
</dbReference>
<dbReference type="InterPro" id="IPR014729">
    <property type="entry name" value="Rossmann-like_a/b/a_fold"/>
</dbReference>
<dbReference type="NCBIfam" id="TIGR00032">
    <property type="entry name" value="argG"/>
    <property type="match status" value="1"/>
</dbReference>
<dbReference type="NCBIfam" id="NF001770">
    <property type="entry name" value="PRK00509.1"/>
    <property type="match status" value="1"/>
</dbReference>
<dbReference type="PANTHER" id="PTHR11587">
    <property type="entry name" value="ARGININOSUCCINATE SYNTHASE"/>
    <property type="match status" value="1"/>
</dbReference>
<dbReference type="PANTHER" id="PTHR11587:SF2">
    <property type="entry name" value="ARGININOSUCCINATE SYNTHASE"/>
    <property type="match status" value="1"/>
</dbReference>
<dbReference type="Pfam" id="PF20979">
    <property type="entry name" value="Arginosuc_syn_C"/>
    <property type="match status" value="1"/>
</dbReference>
<dbReference type="Pfam" id="PF00764">
    <property type="entry name" value="Arginosuc_synth"/>
    <property type="match status" value="1"/>
</dbReference>
<dbReference type="SUPFAM" id="SSF52402">
    <property type="entry name" value="Adenine nucleotide alpha hydrolases-like"/>
    <property type="match status" value="1"/>
</dbReference>
<dbReference type="SUPFAM" id="SSF69864">
    <property type="entry name" value="Argininosuccinate synthetase, C-terminal domain"/>
    <property type="match status" value="1"/>
</dbReference>
<dbReference type="PROSITE" id="PS00564">
    <property type="entry name" value="ARGININOSUCCIN_SYN_1"/>
    <property type="match status" value="1"/>
</dbReference>
<dbReference type="PROSITE" id="PS00565">
    <property type="entry name" value="ARGININOSUCCIN_SYN_2"/>
    <property type="match status" value="1"/>
</dbReference>
<keyword id="KW-0028">Amino-acid biosynthesis</keyword>
<keyword id="KW-0055">Arginine biosynthesis</keyword>
<keyword id="KW-0067">ATP-binding</keyword>
<keyword id="KW-0963">Cytoplasm</keyword>
<keyword id="KW-0436">Ligase</keyword>
<keyword id="KW-0547">Nucleotide-binding</keyword>
<comment type="catalytic activity">
    <reaction evidence="1">
        <text>L-citrulline + L-aspartate + ATP = 2-(N(omega)-L-arginino)succinate + AMP + diphosphate + H(+)</text>
        <dbReference type="Rhea" id="RHEA:10932"/>
        <dbReference type="ChEBI" id="CHEBI:15378"/>
        <dbReference type="ChEBI" id="CHEBI:29991"/>
        <dbReference type="ChEBI" id="CHEBI:30616"/>
        <dbReference type="ChEBI" id="CHEBI:33019"/>
        <dbReference type="ChEBI" id="CHEBI:57472"/>
        <dbReference type="ChEBI" id="CHEBI:57743"/>
        <dbReference type="ChEBI" id="CHEBI:456215"/>
        <dbReference type="EC" id="6.3.4.5"/>
    </reaction>
</comment>
<comment type="pathway">
    <text evidence="1">Amino-acid biosynthesis; L-arginine biosynthesis; L-arginine from L-ornithine and carbamoyl phosphate: step 2/3.</text>
</comment>
<comment type="subunit">
    <text evidence="1">Homotetramer.</text>
</comment>
<comment type="subcellular location">
    <subcellularLocation>
        <location evidence="1">Cytoplasm</location>
    </subcellularLocation>
</comment>
<comment type="similarity">
    <text evidence="1">Belongs to the argininosuccinate synthase family. Type 1 subfamily.</text>
</comment>
<evidence type="ECO:0000255" key="1">
    <source>
        <dbReference type="HAMAP-Rule" id="MF_00005"/>
    </source>
</evidence>
<accession>Q032X6</accession>
<feature type="chain" id="PRO_1000000400" description="Argininosuccinate synthase">
    <location>
        <begin position="1"/>
        <end position="397"/>
    </location>
</feature>
<feature type="binding site" evidence="1">
    <location>
        <begin position="9"/>
        <end position="17"/>
    </location>
    <ligand>
        <name>ATP</name>
        <dbReference type="ChEBI" id="CHEBI:30616"/>
    </ligand>
</feature>
<feature type="binding site" evidence="1">
    <location>
        <position position="86"/>
    </location>
    <ligand>
        <name>L-citrulline</name>
        <dbReference type="ChEBI" id="CHEBI:57743"/>
    </ligand>
</feature>
<feature type="binding site" evidence="1">
    <location>
        <position position="116"/>
    </location>
    <ligand>
        <name>ATP</name>
        <dbReference type="ChEBI" id="CHEBI:30616"/>
    </ligand>
</feature>
<feature type="binding site" evidence="1">
    <location>
        <position position="118"/>
    </location>
    <ligand>
        <name>L-aspartate</name>
        <dbReference type="ChEBI" id="CHEBI:29991"/>
    </ligand>
</feature>
<feature type="binding site" evidence="1">
    <location>
        <position position="122"/>
    </location>
    <ligand>
        <name>L-aspartate</name>
        <dbReference type="ChEBI" id="CHEBI:29991"/>
    </ligand>
</feature>
<feature type="binding site" evidence="1">
    <location>
        <position position="122"/>
    </location>
    <ligand>
        <name>L-citrulline</name>
        <dbReference type="ChEBI" id="CHEBI:57743"/>
    </ligand>
</feature>
<feature type="binding site" evidence="1">
    <location>
        <position position="123"/>
    </location>
    <ligand>
        <name>L-aspartate</name>
        <dbReference type="ChEBI" id="CHEBI:29991"/>
    </ligand>
</feature>
<feature type="binding site" evidence="1">
    <location>
        <position position="126"/>
    </location>
    <ligand>
        <name>L-citrulline</name>
        <dbReference type="ChEBI" id="CHEBI:57743"/>
    </ligand>
</feature>
<feature type="binding site" evidence="1">
    <location>
        <position position="174"/>
    </location>
    <ligand>
        <name>L-citrulline</name>
        <dbReference type="ChEBI" id="CHEBI:57743"/>
    </ligand>
</feature>
<feature type="binding site" evidence="1">
    <location>
        <position position="259"/>
    </location>
    <ligand>
        <name>L-citrulline</name>
        <dbReference type="ChEBI" id="CHEBI:57743"/>
    </ligand>
</feature>
<feature type="binding site" evidence="1">
    <location>
        <position position="271"/>
    </location>
    <ligand>
        <name>L-citrulline</name>
        <dbReference type="ChEBI" id="CHEBI:57743"/>
    </ligand>
</feature>
<protein>
    <recommendedName>
        <fullName evidence="1">Argininosuccinate synthase</fullName>
        <ecNumber evidence="1">6.3.4.5</ecNumber>
    </recommendedName>
    <alternativeName>
        <fullName evidence="1">Citrulline--aspartate ligase</fullName>
    </alternativeName>
</protein>
<proteinExistence type="inferred from homology"/>
<organism>
    <name type="scientific">Lactococcus lactis subsp. cremoris (strain SK11)</name>
    <dbReference type="NCBI Taxonomy" id="272622"/>
    <lineage>
        <taxon>Bacteria</taxon>
        <taxon>Bacillati</taxon>
        <taxon>Bacillota</taxon>
        <taxon>Bacilli</taxon>
        <taxon>Lactobacillales</taxon>
        <taxon>Streptococcaceae</taxon>
        <taxon>Lactococcus</taxon>
        <taxon>Lactococcus cremoris subsp. cremoris</taxon>
    </lineage>
</organism>